<evidence type="ECO:0000255" key="1">
    <source>
        <dbReference type="HAMAP-Rule" id="MF_01584"/>
    </source>
</evidence>
<protein>
    <recommendedName>
        <fullName evidence="1">UPF0502 protein YceH</fullName>
    </recommendedName>
</protein>
<name>YCEH_ECO57</name>
<keyword id="KW-0007">Acetylation</keyword>
<keyword id="KW-1185">Reference proteome</keyword>
<comment type="similarity">
    <text evidence="1">Belongs to the UPF0502 family.</text>
</comment>
<feature type="chain" id="PRO_0000309386" description="UPF0502 protein YceH">
    <location>
        <begin position="1"/>
        <end position="215"/>
    </location>
</feature>
<feature type="modified residue" description="N6-acetyllysine" evidence="1">
    <location>
        <position position="80"/>
    </location>
</feature>
<gene>
    <name evidence="1" type="primary">yceH</name>
    <name type="ordered locus">Z1704</name>
    <name type="ordered locus">ECs1445</name>
</gene>
<dbReference type="EMBL" id="AE005174">
    <property type="protein sequence ID" value="AAG55813.1"/>
    <property type="molecule type" value="Genomic_DNA"/>
</dbReference>
<dbReference type="EMBL" id="BA000007">
    <property type="protein sequence ID" value="BAB34868.1"/>
    <property type="molecule type" value="Genomic_DNA"/>
</dbReference>
<dbReference type="PIR" id="A85669">
    <property type="entry name" value="A85669"/>
</dbReference>
<dbReference type="PIR" id="E99809">
    <property type="entry name" value="E99809"/>
</dbReference>
<dbReference type="RefSeq" id="NP_309472.1">
    <property type="nucleotide sequence ID" value="NC_002695.1"/>
</dbReference>
<dbReference type="RefSeq" id="WP_000877099.1">
    <property type="nucleotide sequence ID" value="NZ_VOAI01000018.1"/>
</dbReference>
<dbReference type="SMR" id="Q8X8M9"/>
<dbReference type="STRING" id="155864.Z1704"/>
<dbReference type="GeneID" id="913563"/>
<dbReference type="KEGG" id="ece:Z1704"/>
<dbReference type="KEGG" id="ecs:ECs_1445"/>
<dbReference type="PATRIC" id="fig|386585.9.peg.1546"/>
<dbReference type="eggNOG" id="COG3132">
    <property type="taxonomic scope" value="Bacteria"/>
</dbReference>
<dbReference type="HOGENOM" id="CLU_057831_2_0_6"/>
<dbReference type="OMA" id="CNQKSSR"/>
<dbReference type="Proteomes" id="UP000000558">
    <property type="component" value="Chromosome"/>
</dbReference>
<dbReference type="Proteomes" id="UP000002519">
    <property type="component" value="Chromosome"/>
</dbReference>
<dbReference type="FunFam" id="1.10.10.10:FF:000196">
    <property type="entry name" value="UPF0502 protein YceH"/>
    <property type="match status" value="1"/>
</dbReference>
<dbReference type="FunFam" id="1.10.10.10:FF:000241">
    <property type="entry name" value="UPF0502 protein YceH"/>
    <property type="match status" value="1"/>
</dbReference>
<dbReference type="Gene3D" id="1.10.10.10">
    <property type="entry name" value="Winged helix-like DNA-binding domain superfamily/Winged helix DNA-binding domain"/>
    <property type="match status" value="2"/>
</dbReference>
<dbReference type="HAMAP" id="MF_01584">
    <property type="entry name" value="UPF0502"/>
    <property type="match status" value="1"/>
</dbReference>
<dbReference type="InterPro" id="IPR007432">
    <property type="entry name" value="DUF480"/>
</dbReference>
<dbReference type="InterPro" id="IPR036388">
    <property type="entry name" value="WH-like_DNA-bd_sf"/>
</dbReference>
<dbReference type="InterPro" id="IPR036390">
    <property type="entry name" value="WH_DNA-bd_sf"/>
</dbReference>
<dbReference type="NCBIfam" id="NF008413">
    <property type="entry name" value="PRK11239.1"/>
    <property type="match status" value="1"/>
</dbReference>
<dbReference type="PANTHER" id="PTHR38768">
    <property type="entry name" value="UPF0502 PROTEIN YCEH"/>
    <property type="match status" value="1"/>
</dbReference>
<dbReference type="PANTHER" id="PTHR38768:SF1">
    <property type="entry name" value="UPF0502 PROTEIN YCEH"/>
    <property type="match status" value="1"/>
</dbReference>
<dbReference type="Pfam" id="PF04337">
    <property type="entry name" value="DUF480"/>
    <property type="match status" value="1"/>
</dbReference>
<dbReference type="SUPFAM" id="SSF46785">
    <property type="entry name" value="Winged helix' DNA-binding domain"/>
    <property type="match status" value="2"/>
</dbReference>
<proteinExistence type="inferred from homology"/>
<reference key="1">
    <citation type="journal article" date="2001" name="Nature">
        <title>Genome sequence of enterohaemorrhagic Escherichia coli O157:H7.</title>
        <authorList>
            <person name="Perna N.T."/>
            <person name="Plunkett G. III"/>
            <person name="Burland V."/>
            <person name="Mau B."/>
            <person name="Glasner J.D."/>
            <person name="Rose D.J."/>
            <person name="Mayhew G.F."/>
            <person name="Evans P.S."/>
            <person name="Gregor J."/>
            <person name="Kirkpatrick H.A."/>
            <person name="Posfai G."/>
            <person name="Hackett J."/>
            <person name="Klink S."/>
            <person name="Boutin A."/>
            <person name="Shao Y."/>
            <person name="Miller L."/>
            <person name="Grotbeck E.J."/>
            <person name="Davis N.W."/>
            <person name="Lim A."/>
            <person name="Dimalanta E.T."/>
            <person name="Potamousis K."/>
            <person name="Apodaca J."/>
            <person name="Anantharaman T.S."/>
            <person name="Lin J."/>
            <person name="Yen G."/>
            <person name="Schwartz D.C."/>
            <person name="Welch R.A."/>
            <person name="Blattner F.R."/>
        </authorList>
    </citation>
    <scope>NUCLEOTIDE SEQUENCE [LARGE SCALE GENOMIC DNA]</scope>
    <source>
        <strain>O157:H7 / EDL933 / ATCC 700927 / EHEC</strain>
    </source>
</reference>
<reference key="2">
    <citation type="journal article" date="2001" name="DNA Res.">
        <title>Complete genome sequence of enterohemorrhagic Escherichia coli O157:H7 and genomic comparison with a laboratory strain K-12.</title>
        <authorList>
            <person name="Hayashi T."/>
            <person name="Makino K."/>
            <person name="Ohnishi M."/>
            <person name="Kurokawa K."/>
            <person name="Ishii K."/>
            <person name="Yokoyama K."/>
            <person name="Han C.-G."/>
            <person name="Ohtsubo E."/>
            <person name="Nakayama K."/>
            <person name="Murata T."/>
            <person name="Tanaka M."/>
            <person name="Tobe T."/>
            <person name="Iida T."/>
            <person name="Takami H."/>
            <person name="Honda T."/>
            <person name="Sasakawa C."/>
            <person name="Ogasawara N."/>
            <person name="Yasunaga T."/>
            <person name="Kuhara S."/>
            <person name="Shiba T."/>
            <person name="Hattori M."/>
            <person name="Shinagawa H."/>
        </authorList>
    </citation>
    <scope>NUCLEOTIDE SEQUENCE [LARGE SCALE GENOMIC DNA]</scope>
    <source>
        <strain>O157:H7 / Sakai / RIMD 0509952 / EHEC</strain>
    </source>
</reference>
<sequence>MKYQLTALEARVIGCLLEKQVTTPEQYPLSVNGVVTACNQKTNREPVMNLSESEVQEQLDNLVKRHYLRTVSGFGNRVTKYEQRFCNSEFGDLKLSAAEVALITTLLLRGAQTPGELRSRAARMYEFSDMAEVELTLEQLANREDGPFVVRLAREPGKRESRYMHLFSGEVEDQPAVTDMSNAVDGDLQARVEALEIEVAELKQRLDSLLAHLGD</sequence>
<organism>
    <name type="scientific">Escherichia coli O157:H7</name>
    <dbReference type="NCBI Taxonomy" id="83334"/>
    <lineage>
        <taxon>Bacteria</taxon>
        <taxon>Pseudomonadati</taxon>
        <taxon>Pseudomonadota</taxon>
        <taxon>Gammaproteobacteria</taxon>
        <taxon>Enterobacterales</taxon>
        <taxon>Enterobacteriaceae</taxon>
        <taxon>Escherichia</taxon>
    </lineage>
</organism>
<accession>Q8X8M9</accession>
<accession>Q7AFA0</accession>